<protein>
    <recommendedName>
        <fullName evidence="2">Translation initiation factor IF-3</fullName>
    </recommendedName>
</protein>
<reference key="1">
    <citation type="journal article" date="2000" name="Nature">
        <title>Genome sequence of the endocellular bacterial symbiont of aphids Buchnera sp. APS.</title>
        <authorList>
            <person name="Shigenobu S."/>
            <person name="Watanabe H."/>
            <person name="Hattori M."/>
            <person name="Sakaki Y."/>
            <person name="Ishikawa H."/>
        </authorList>
    </citation>
    <scope>NUCLEOTIDE SEQUENCE [LARGE SCALE GENOMIC DNA]</scope>
    <source>
        <strain>APS</strain>
    </source>
</reference>
<comment type="function">
    <text evidence="2">IF-3 binds to the 30S ribosomal subunit and shifts the equilibrium between 70S ribosomes and their 50S and 30S subunits in favor of the free subunits, thus enhancing the availability of 30S subunits on which protein synthesis initiation begins.</text>
</comment>
<comment type="subunit">
    <text evidence="2">Monomer.</text>
</comment>
<comment type="subcellular location">
    <subcellularLocation>
        <location evidence="2">Cytoplasm</location>
    </subcellularLocation>
</comment>
<comment type="similarity">
    <text evidence="2">Belongs to the IF-3 family.</text>
</comment>
<sequence>MKGGKIVQLTRPNRINSEIRAIKVRLTGVEGDQIGIVNLREALKKSEELGLDLVEISPNAEPPVCRIMDYGKFLYEKSKSSKEQKKKQKVIHIKEIKFRPGTDEGDYQVKLRNLIRFLEDGDKAKITLRFRGREMAHQKIGVDVLNRVKNDLIELATVEYFPSKIEGRQMIMILAPKKK</sequence>
<accession>P57226</accession>
<proteinExistence type="inferred from homology"/>
<keyword id="KW-0963">Cytoplasm</keyword>
<keyword id="KW-0396">Initiation factor</keyword>
<keyword id="KW-0648">Protein biosynthesis</keyword>
<keyword id="KW-1185">Reference proteome</keyword>
<dbReference type="EMBL" id="BA000003">
    <property type="protein sequence ID" value="BAB12844.1"/>
    <property type="molecule type" value="Genomic_DNA"/>
</dbReference>
<dbReference type="RefSeq" id="NP_239958.1">
    <property type="nucleotide sequence ID" value="NC_002528.1"/>
</dbReference>
<dbReference type="RefSeq" id="WP_010895961.1">
    <property type="nucleotide sequence ID" value="NC_002528.1"/>
</dbReference>
<dbReference type="SMR" id="P57226"/>
<dbReference type="STRING" id="563178.BUAP5A_124"/>
<dbReference type="EnsemblBacteria" id="BAB12844">
    <property type="protein sequence ID" value="BAB12844"/>
    <property type="gene ID" value="BAB12844"/>
</dbReference>
<dbReference type="KEGG" id="buc:BU126"/>
<dbReference type="PATRIC" id="fig|107806.10.peg.135"/>
<dbReference type="eggNOG" id="COG0290">
    <property type="taxonomic scope" value="Bacteria"/>
</dbReference>
<dbReference type="HOGENOM" id="CLU_054919_3_2_6"/>
<dbReference type="Proteomes" id="UP000001806">
    <property type="component" value="Chromosome"/>
</dbReference>
<dbReference type="GO" id="GO:0005829">
    <property type="term" value="C:cytosol"/>
    <property type="evidence" value="ECO:0007669"/>
    <property type="project" value="TreeGrafter"/>
</dbReference>
<dbReference type="GO" id="GO:0016020">
    <property type="term" value="C:membrane"/>
    <property type="evidence" value="ECO:0007669"/>
    <property type="project" value="TreeGrafter"/>
</dbReference>
<dbReference type="GO" id="GO:0043022">
    <property type="term" value="F:ribosome binding"/>
    <property type="evidence" value="ECO:0007669"/>
    <property type="project" value="TreeGrafter"/>
</dbReference>
<dbReference type="GO" id="GO:0003743">
    <property type="term" value="F:translation initiation factor activity"/>
    <property type="evidence" value="ECO:0007669"/>
    <property type="project" value="UniProtKB-UniRule"/>
</dbReference>
<dbReference type="GO" id="GO:0032790">
    <property type="term" value="P:ribosome disassembly"/>
    <property type="evidence" value="ECO:0007669"/>
    <property type="project" value="TreeGrafter"/>
</dbReference>
<dbReference type="FunFam" id="3.10.20.80:FF:000001">
    <property type="entry name" value="Translation initiation factor IF-3"/>
    <property type="match status" value="1"/>
</dbReference>
<dbReference type="FunFam" id="3.30.110.10:FF:000001">
    <property type="entry name" value="Translation initiation factor IF-3"/>
    <property type="match status" value="1"/>
</dbReference>
<dbReference type="Gene3D" id="3.30.110.10">
    <property type="entry name" value="Translation initiation factor 3 (IF-3), C-terminal domain"/>
    <property type="match status" value="1"/>
</dbReference>
<dbReference type="Gene3D" id="3.10.20.80">
    <property type="entry name" value="Translation initiation factor 3 (IF-3), N-terminal domain"/>
    <property type="match status" value="1"/>
</dbReference>
<dbReference type="HAMAP" id="MF_00080">
    <property type="entry name" value="IF_3"/>
    <property type="match status" value="1"/>
</dbReference>
<dbReference type="InterPro" id="IPR036788">
    <property type="entry name" value="T_IF-3_C_sf"/>
</dbReference>
<dbReference type="InterPro" id="IPR036787">
    <property type="entry name" value="T_IF-3_N_sf"/>
</dbReference>
<dbReference type="InterPro" id="IPR019813">
    <property type="entry name" value="Translation_initiation_fac3_CS"/>
</dbReference>
<dbReference type="InterPro" id="IPR001288">
    <property type="entry name" value="Translation_initiation_fac_3"/>
</dbReference>
<dbReference type="InterPro" id="IPR019815">
    <property type="entry name" value="Translation_initiation_fac_3_C"/>
</dbReference>
<dbReference type="InterPro" id="IPR019814">
    <property type="entry name" value="Translation_initiation_fac_3_N"/>
</dbReference>
<dbReference type="NCBIfam" id="TIGR00168">
    <property type="entry name" value="infC"/>
    <property type="match status" value="1"/>
</dbReference>
<dbReference type="PANTHER" id="PTHR10938">
    <property type="entry name" value="TRANSLATION INITIATION FACTOR IF-3"/>
    <property type="match status" value="1"/>
</dbReference>
<dbReference type="PANTHER" id="PTHR10938:SF0">
    <property type="entry name" value="TRANSLATION INITIATION FACTOR IF-3, MITOCHONDRIAL"/>
    <property type="match status" value="1"/>
</dbReference>
<dbReference type="Pfam" id="PF00707">
    <property type="entry name" value="IF3_C"/>
    <property type="match status" value="1"/>
</dbReference>
<dbReference type="Pfam" id="PF05198">
    <property type="entry name" value="IF3_N"/>
    <property type="match status" value="1"/>
</dbReference>
<dbReference type="SUPFAM" id="SSF55200">
    <property type="entry name" value="Translation initiation factor IF3, C-terminal domain"/>
    <property type="match status" value="1"/>
</dbReference>
<dbReference type="SUPFAM" id="SSF54364">
    <property type="entry name" value="Translation initiation factor IF3, N-terminal domain"/>
    <property type="match status" value="1"/>
</dbReference>
<dbReference type="PROSITE" id="PS00938">
    <property type="entry name" value="IF3"/>
    <property type="match status" value="1"/>
</dbReference>
<organism>
    <name type="scientific">Buchnera aphidicola subsp. Acyrthosiphon pisum (strain APS)</name>
    <name type="common">Acyrthosiphon pisum symbiotic bacterium</name>
    <dbReference type="NCBI Taxonomy" id="107806"/>
    <lineage>
        <taxon>Bacteria</taxon>
        <taxon>Pseudomonadati</taxon>
        <taxon>Pseudomonadota</taxon>
        <taxon>Gammaproteobacteria</taxon>
        <taxon>Enterobacterales</taxon>
        <taxon>Erwiniaceae</taxon>
        <taxon>Buchnera</taxon>
    </lineage>
</organism>
<evidence type="ECO:0000250" key="1"/>
<evidence type="ECO:0000255" key="2">
    <source>
        <dbReference type="HAMAP-Rule" id="MF_00080"/>
    </source>
</evidence>
<name>IF3_BUCAI</name>
<feature type="chain" id="PRO_0000177495" description="Translation initiation factor IF-3">
    <location>
        <begin position="1"/>
        <end position="179"/>
    </location>
</feature>
<feature type="site" description="Important for 30S binding" evidence="1">
    <location>
        <position position="107"/>
    </location>
</feature>
<feature type="site" description="Important for 30S binding" evidence="1">
    <location>
        <position position="110"/>
    </location>
</feature>
<gene>
    <name evidence="2" type="primary">infC</name>
    <name type="ordered locus">BU126</name>
</gene>